<protein>
    <recommendedName>
        <fullName evidence="1">Type III pantothenate kinase</fullName>
        <ecNumber evidence="1">2.7.1.33</ecNumber>
    </recommendedName>
    <alternativeName>
        <fullName evidence="1">PanK-III</fullName>
    </alternativeName>
    <alternativeName>
        <fullName evidence="1">Pantothenic acid kinase</fullName>
    </alternativeName>
</protein>
<name>COAX_MYCVP</name>
<dbReference type="EC" id="2.7.1.33" evidence="1"/>
<dbReference type="EMBL" id="CP000511">
    <property type="protein sequence ID" value="ABM16133.1"/>
    <property type="molecule type" value="Genomic_DNA"/>
</dbReference>
<dbReference type="RefSeq" id="WP_011782501.1">
    <property type="nucleotide sequence ID" value="NC_008726.1"/>
</dbReference>
<dbReference type="SMR" id="A1TG33"/>
<dbReference type="STRING" id="350058.Mvan_5362"/>
<dbReference type="KEGG" id="mva:Mvan_5362"/>
<dbReference type="eggNOG" id="COG1521">
    <property type="taxonomic scope" value="Bacteria"/>
</dbReference>
<dbReference type="HOGENOM" id="CLU_066627_1_0_11"/>
<dbReference type="UniPathway" id="UPA00241">
    <property type="reaction ID" value="UER00352"/>
</dbReference>
<dbReference type="Proteomes" id="UP000009159">
    <property type="component" value="Chromosome"/>
</dbReference>
<dbReference type="GO" id="GO:0005737">
    <property type="term" value="C:cytoplasm"/>
    <property type="evidence" value="ECO:0007669"/>
    <property type="project" value="UniProtKB-SubCell"/>
</dbReference>
<dbReference type="GO" id="GO:0005524">
    <property type="term" value="F:ATP binding"/>
    <property type="evidence" value="ECO:0007669"/>
    <property type="project" value="UniProtKB-UniRule"/>
</dbReference>
<dbReference type="GO" id="GO:0046872">
    <property type="term" value="F:metal ion binding"/>
    <property type="evidence" value="ECO:0007669"/>
    <property type="project" value="UniProtKB-KW"/>
</dbReference>
<dbReference type="GO" id="GO:0004594">
    <property type="term" value="F:pantothenate kinase activity"/>
    <property type="evidence" value="ECO:0007669"/>
    <property type="project" value="UniProtKB-UniRule"/>
</dbReference>
<dbReference type="GO" id="GO:0015937">
    <property type="term" value="P:coenzyme A biosynthetic process"/>
    <property type="evidence" value="ECO:0007669"/>
    <property type="project" value="UniProtKB-UniRule"/>
</dbReference>
<dbReference type="CDD" id="cd24015">
    <property type="entry name" value="ASKHA_NBD_PanK-III"/>
    <property type="match status" value="1"/>
</dbReference>
<dbReference type="Gene3D" id="3.30.420.40">
    <property type="match status" value="2"/>
</dbReference>
<dbReference type="HAMAP" id="MF_01274">
    <property type="entry name" value="Pantothen_kinase_3"/>
    <property type="match status" value="1"/>
</dbReference>
<dbReference type="InterPro" id="IPR043129">
    <property type="entry name" value="ATPase_NBD"/>
</dbReference>
<dbReference type="InterPro" id="IPR004619">
    <property type="entry name" value="Type_III_PanK"/>
</dbReference>
<dbReference type="NCBIfam" id="TIGR00671">
    <property type="entry name" value="baf"/>
    <property type="match status" value="1"/>
</dbReference>
<dbReference type="NCBIfam" id="NF009845">
    <property type="entry name" value="PRK13318.1-3"/>
    <property type="match status" value="1"/>
</dbReference>
<dbReference type="PANTHER" id="PTHR34265">
    <property type="entry name" value="TYPE III PANTOTHENATE KINASE"/>
    <property type="match status" value="1"/>
</dbReference>
<dbReference type="PANTHER" id="PTHR34265:SF1">
    <property type="entry name" value="TYPE III PANTOTHENATE KINASE"/>
    <property type="match status" value="1"/>
</dbReference>
<dbReference type="Pfam" id="PF03309">
    <property type="entry name" value="Pan_kinase"/>
    <property type="match status" value="1"/>
</dbReference>
<dbReference type="SUPFAM" id="SSF53067">
    <property type="entry name" value="Actin-like ATPase domain"/>
    <property type="match status" value="2"/>
</dbReference>
<keyword id="KW-0067">ATP-binding</keyword>
<keyword id="KW-0173">Coenzyme A biosynthesis</keyword>
<keyword id="KW-0963">Cytoplasm</keyword>
<keyword id="KW-0418">Kinase</keyword>
<keyword id="KW-0479">Metal-binding</keyword>
<keyword id="KW-0547">Nucleotide-binding</keyword>
<keyword id="KW-0630">Potassium</keyword>
<keyword id="KW-0808">Transferase</keyword>
<comment type="function">
    <text evidence="1">Catalyzes the phosphorylation of pantothenate (Pan), the first step in CoA biosynthesis.</text>
</comment>
<comment type="catalytic activity">
    <reaction evidence="1">
        <text>(R)-pantothenate + ATP = (R)-4'-phosphopantothenate + ADP + H(+)</text>
        <dbReference type="Rhea" id="RHEA:16373"/>
        <dbReference type="ChEBI" id="CHEBI:10986"/>
        <dbReference type="ChEBI" id="CHEBI:15378"/>
        <dbReference type="ChEBI" id="CHEBI:29032"/>
        <dbReference type="ChEBI" id="CHEBI:30616"/>
        <dbReference type="ChEBI" id="CHEBI:456216"/>
        <dbReference type="EC" id="2.7.1.33"/>
    </reaction>
</comment>
<comment type="cofactor">
    <cofactor evidence="1">
        <name>NH4(+)</name>
        <dbReference type="ChEBI" id="CHEBI:28938"/>
    </cofactor>
    <cofactor evidence="1">
        <name>K(+)</name>
        <dbReference type="ChEBI" id="CHEBI:29103"/>
    </cofactor>
    <text evidence="1">A monovalent cation. Ammonium or potassium.</text>
</comment>
<comment type="pathway">
    <text evidence="1">Cofactor biosynthesis; coenzyme A biosynthesis; CoA from (R)-pantothenate: step 1/5.</text>
</comment>
<comment type="subunit">
    <text evidence="1">Homodimer.</text>
</comment>
<comment type="subcellular location">
    <subcellularLocation>
        <location evidence="1">Cytoplasm</location>
    </subcellularLocation>
</comment>
<comment type="similarity">
    <text evidence="1">Belongs to the type III pantothenate kinase family.</text>
</comment>
<proteinExistence type="inferred from homology"/>
<evidence type="ECO:0000255" key="1">
    <source>
        <dbReference type="HAMAP-Rule" id="MF_01274"/>
    </source>
</evidence>
<gene>
    <name evidence="1" type="primary">coaX</name>
    <name type="ordered locus">Mvan_5362</name>
</gene>
<organism>
    <name type="scientific">Mycolicibacterium vanbaalenii (strain DSM 7251 / JCM 13017 / BCRC 16820 / KCTC 9966 / NRRL B-24157 / PYR-1)</name>
    <name type="common">Mycobacterium vanbaalenii</name>
    <dbReference type="NCBI Taxonomy" id="350058"/>
    <lineage>
        <taxon>Bacteria</taxon>
        <taxon>Bacillati</taxon>
        <taxon>Actinomycetota</taxon>
        <taxon>Actinomycetes</taxon>
        <taxon>Mycobacteriales</taxon>
        <taxon>Mycobacteriaceae</taxon>
        <taxon>Mycolicibacterium</taxon>
    </lineage>
</organism>
<sequence length="271" mass="28866">MLLAIDVRNTHTVVGLISGSGDHAKVEQHWRIRTEPEVTADELALTIDGLIGDDAERLTGAAGLSTVPSVLHEVRVMLDQYWPSVPHVLIEPGVRTGIPLLVDNPKEVGADRIVNCLAAYHKFGTASIVVDFGSSICVDVVSAKGEFLGGAIAPGVQVSSDAAAERSAALRRVELTRPRSVVGKNTVECMQAGAVFGFAGLVDGLVSRVRDDVDGFGGGDVNVVATGHGAPLVLADLRTVEHYDRHLTLDGLRLVFERNRDSQRGKLKQAR</sequence>
<reference key="1">
    <citation type="submission" date="2006-12" db="EMBL/GenBank/DDBJ databases">
        <title>Complete sequence of Mycobacterium vanbaalenii PYR-1.</title>
        <authorList>
            <consortium name="US DOE Joint Genome Institute"/>
            <person name="Copeland A."/>
            <person name="Lucas S."/>
            <person name="Lapidus A."/>
            <person name="Barry K."/>
            <person name="Detter J.C."/>
            <person name="Glavina del Rio T."/>
            <person name="Hammon N."/>
            <person name="Israni S."/>
            <person name="Dalin E."/>
            <person name="Tice H."/>
            <person name="Pitluck S."/>
            <person name="Singan V."/>
            <person name="Schmutz J."/>
            <person name="Larimer F."/>
            <person name="Land M."/>
            <person name="Hauser L."/>
            <person name="Kyrpides N."/>
            <person name="Anderson I.J."/>
            <person name="Miller C."/>
            <person name="Richardson P."/>
        </authorList>
    </citation>
    <scope>NUCLEOTIDE SEQUENCE [LARGE SCALE GENOMIC DNA]</scope>
    <source>
        <strain>DSM 7251 / JCM 13017 / BCRC 16820 / KCTC 9966 / NRRL B-24157 / PYR-1</strain>
    </source>
</reference>
<feature type="chain" id="PRO_1000054396" description="Type III pantothenate kinase">
    <location>
        <begin position="1"/>
        <end position="271"/>
    </location>
</feature>
<feature type="active site" description="Proton acceptor" evidence="1">
    <location>
        <position position="111"/>
    </location>
</feature>
<feature type="binding site" evidence="1">
    <location>
        <begin position="6"/>
        <end position="13"/>
    </location>
    <ligand>
        <name>ATP</name>
        <dbReference type="ChEBI" id="CHEBI:30616"/>
    </ligand>
</feature>
<feature type="binding site" evidence="1">
    <location>
        <begin position="109"/>
        <end position="112"/>
    </location>
    <ligand>
        <name>substrate</name>
    </ligand>
</feature>
<feature type="binding site" evidence="1">
    <location>
        <position position="131"/>
    </location>
    <ligand>
        <name>K(+)</name>
        <dbReference type="ChEBI" id="CHEBI:29103"/>
    </ligand>
</feature>
<feature type="binding site" evidence="1">
    <location>
        <position position="134"/>
    </location>
    <ligand>
        <name>ATP</name>
        <dbReference type="ChEBI" id="CHEBI:30616"/>
    </ligand>
</feature>
<feature type="binding site" evidence="1">
    <location>
        <position position="186"/>
    </location>
    <ligand>
        <name>substrate</name>
    </ligand>
</feature>
<accession>A1TG33</accession>